<sequence>MVLIRVLANLLLLQLSYAQESSELVIGGDECDINEHPFLVALHTARSKRFHCAGTLLNKEWVLTAARCDRKNIRIKFGVHNKNVQNEDEEMRVPKEKHFCVSSKTYTRWDKDIMLIRLKRPVNDGTHIAPLSLPSNPPSVGSVCRIMGWGSITTTKVTYPDVPHCANIKLFDYSVCRDAYKGLPEKSRTLCAGILEGGIDSCKVDNGGPLICNGQFQGIGSWEGHPCAQPLKPALYTNVFEYTDWIEGIIARNTTVTCPP</sequence>
<reference key="1">
    <citation type="journal article" date="2004" name="Gene">
        <title>Bitis gabonica (Gaboon viper) snake venom gland: toward a catalog for the full-length transcripts (cDNA) and proteins.</title>
        <authorList>
            <person name="Francischetti I.M.B."/>
            <person name="My-Pham V."/>
            <person name="Harrison J."/>
            <person name="Garfield M.K."/>
            <person name="Ribeiro J.M.C."/>
        </authorList>
    </citation>
    <scope>NUCLEOTIDE SEQUENCE [LARGE SCALE MRNA]</scope>
    <source>
        <tissue>Venom gland</tissue>
    </source>
</reference>
<reference key="2">
    <citation type="journal article" date="2007" name="J. Proteome Res.">
        <title>Snake venomics of Bitis gabonica gabonica. Protein family composition, subunit organization of venom toxins, and characterization of dimeric disintegrins bitisgabonin-1 and bitisgabonin-2.</title>
        <authorList>
            <person name="Calvete J.J."/>
            <person name="Marcinkiewicz C."/>
            <person name="Sanz L."/>
        </authorList>
    </citation>
    <scope>PROTEIN SEQUENCE OF 50-59; 83-95; 109-117 AND 157-169</scope>
    <scope>SUBCELLULAR LOCATION</scope>
    <scope>TISSUE SPECIFICITY</scope>
    <scope>IDENTIFICATION BY MASS SPECTROMETRY</scope>
    <source>
        <tissue>Venom</tissue>
    </source>
</reference>
<feature type="signal peptide" evidence="2">
    <location>
        <begin position="1"/>
        <end position="18"/>
    </location>
</feature>
<feature type="propeptide" id="PRO_0000294982" evidence="1">
    <location>
        <begin position="19"/>
        <end position="24"/>
    </location>
</feature>
<feature type="chain" id="PRO_0000294983" description="Snake venom serine protease homolog 1">
    <location>
        <begin position="25"/>
        <end position="260"/>
    </location>
</feature>
<feature type="domain" description="Peptidase S1" evidence="3">
    <location>
        <begin position="25"/>
        <end position="251"/>
    </location>
</feature>
<feature type="glycosylation site" description="N-linked (GlcNAc...) asparagine" evidence="2">
    <location>
        <position position="253"/>
    </location>
</feature>
<feature type="disulfide bond" evidence="3">
    <location>
        <begin position="31"/>
        <end position="165"/>
    </location>
</feature>
<feature type="disulfide bond" evidence="3">
    <location>
        <begin position="52"/>
        <end position="68"/>
    </location>
</feature>
<feature type="disulfide bond" evidence="3">
    <location>
        <begin position="100"/>
        <end position="258"/>
    </location>
</feature>
<feature type="disulfide bond" evidence="3">
    <location>
        <begin position="144"/>
        <end position="212"/>
    </location>
</feature>
<feature type="disulfide bond" evidence="3">
    <location>
        <begin position="176"/>
        <end position="191"/>
    </location>
</feature>
<feature type="disulfide bond" evidence="3">
    <location>
        <begin position="202"/>
        <end position="227"/>
    </location>
</feature>
<proteinExistence type="evidence at protein level"/>
<dbReference type="EMBL" id="AY430410">
    <property type="protein sequence ID" value="AAR24534.1"/>
    <property type="molecule type" value="mRNA"/>
</dbReference>
<dbReference type="SMR" id="Q6T6S7"/>
<dbReference type="MEROPS" id="S01.509"/>
<dbReference type="GO" id="GO:0005576">
    <property type="term" value="C:extracellular region"/>
    <property type="evidence" value="ECO:0007669"/>
    <property type="project" value="UniProtKB-SubCell"/>
</dbReference>
<dbReference type="GO" id="GO:0030141">
    <property type="term" value="C:secretory granule"/>
    <property type="evidence" value="ECO:0007669"/>
    <property type="project" value="TreeGrafter"/>
</dbReference>
<dbReference type="GO" id="GO:0090729">
    <property type="term" value="F:toxin activity"/>
    <property type="evidence" value="ECO:0007669"/>
    <property type="project" value="UniProtKB-KW"/>
</dbReference>
<dbReference type="CDD" id="cd00190">
    <property type="entry name" value="Tryp_SPc"/>
    <property type="match status" value="1"/>
</dbReference>
<dbReference type="FunFam" id="2.40.10.10:FF:000158">
    <property type="entry name" value="Thrombin-like enzyme saxthrombin"/>
    <property type="match status" value="1"/>
</dbReference>
<dbReference type="Gene3D" id="2.40.10.10">
    <property type="entry name" value="Trypsin-like serine proteases"/>
    <property type="match status" value="2"/>
</dbReference>
<dbReference type="InterPro" id="IPR009003">
    <property type="entry name" value="Peptidase_S1_PA"/>
</dbReference>
<dbReference type="InterPro" id="IPR043504">
    <property type="entry name" value="Peptidase_S1_PA_chymotrypsin"/>
</dbReference>
<dbReference type="InterPro" id="IPR001314">
    <property type="entry name" value="Peptidase_S1A"/>
</dbReference>
<dbReference type="InterPro" id="IPR001254">
    <property type="entry name" value="Trypsin_dom"/>
</dbReference>
<dbReference type="PANTHER" id="PTHR24271:SF47">
    <property type="entry name" value="KALLIKREIN-1"/>
    <property type="match status" value="1"/>
</dbReference>
<dbReference type="PANTHER" id="PTHR24271">
    <property type="entry name" value="KALLIKREIN-RELATED"/>
    <property type="match status" value="1"/>
</dbReference>
<dbReference type="Pfam" id="PF00089">
    <property type="entry name" value="Trypsin"/>
    <property type="match status" value="1"/>
</dbReference>
<dbReference type="PRINTS" id="PR00722">
    <property type="entry name" value="CHYMOTRYPSIN"/>
</dbReference>
<dbReference type="SMART" id="SM00020">
    <property type="entry name" value="Tryp_SPc"/>
    <property type="match status" value="1"/>
</dbReference>
<dbReference type="SUPFAM" id="SSF50494">
    <property type="entry name" value="Trypsin-like serine proteases"/>
    <property type="match status" value="1"/>
</dbReference>
<dbReference type="PROSITE" id="PS50240">
    <property type="entry name" value="TRYPSIN_DOM"/>
    <property type="match status" value="1"/>
</dbReference>
<name>VSPH1_BITGA</name>
<comment type="function">
    <text evidence="5">Snake venom serine protease homolog that may act in the hemostasis system of the prey.</text>
</comment>
<comment type="subcellular location">
    <subcellularLocation>
        <location evidence="4">Secreted</location>
    </subcellularLocation>
</comment>
<comment type="tissue specificity">
    <text evidence="4">Expressed by the venom gland.</text>
</comment>
<comment type="similarity">
    <text evidence="5">Belongs to the peptidase S1 family. Snake venom subfamily.</text>
</comment>
<comment type="caution">
    <text evidence="5">Lacks the conserved His residue in position 67 and the conserved Ser residue in position 206 essential for protease activity.</text>
</comment>
<evidence type="ECO:0000250" key="1"/>
<evidence type="ECO:0000255" key="2"/>
<evidence type="ECO:0000255" key="3">
    <source>
        <dbReference type="PROSITE-ProRule" id="PRU00274"/>
    </source>
</evidence>
<evidence type="ECO:0000269" key="4">
    <source>
    </source>
</evidence>
<evidence type="ECO:0000305" key="5"/>
<protein>
    <recommendedName>
        <fullName>Snake venom serine protease homolog 1</fullName>
    </recommendedName>
    <alternativeName>
        <fullName>Venom serine proteinase-like protein 1</fullName>
    </alternativeName>
</protein>
<organism>
    <name type="scientific">Bitis gabonica</name>
    <name type="common">Gaboon adder</name>
    <name type="synonym">Gaboon viper</name>
    <dbReference type="NCBI Taxonomy" id="8694"/>
    <lineage>
        <taxon>Eukaryota</taxon>
        <taxon>Metazoa</taxon>
        <taxon>Chordata</taxon>
        <taxon>Craniata</taxon>
        <taxon>Vertebrata</taxon>
        <taxon>Euteleostomi</taxon>
        <taxon>Lepidosauria</taxon>
        <taxon>Squamata</taxon>
        <taxon>Bifurcata</taxon>
        <taxon>Unidentata</taxon>
        <taxon>Episquamata</taxon>
        <taxon>Toxicofera</taxon>
        <taxon>Serpentes</taxon>
        <taxon>Colubroidea</taxon>
        <taxon>Viperidae</taxon>
        <taxon>Viperinae</taxon>
        <taxon>Bitis</taxon>
    </lineage>
</organism>
<accession>Q6T6S7</accession>
<keyword id="KW-0903">Direct protein sequencing</keyword>
<keyword id="KW-1015">Disulfide bond</keyword>
<keyword id="KW-0325">Glycoprotein</keyword>
<keyword id="KW-1199">Hemostasis impairing toxin</keyword>
<keyword id="KW-0964">Secreted</keyword>
<keyword id="KW-0721">Serine protease homolog</keyword>
<keyword id="KW-0732">Signal</keyword>
<keyword id="KW-0800">Toxin</keyword>